<feature type="chain" id="PRO_0000279460" description="Spermatogenesis-associated protein 46">
    <location>
        <begin position="1"/>
        <end position="204"/>
    </location>
</feature>
<feature type="region of interest" description="Disordered" evidence="1">
    <location>
        <begin position="101"/>
        <end position="120"/>
    </location>
</feature>
<gene>
    <name type="primary">Spata46</name>
</gene>
<accession>Q4FZF2</accession>
<proteinExistence type="evidence at transcript level"/>
<organism>
    <name type="scientific">Mus musculus</name>
    <name type="common">Mouse</name>
    <dbReference type="NCBI Taxonomy" id="10090"/>
    <lineage>
        <taxon>Eukaryota</taxon>
        <taxon>Metazoa</taxon>
        <taxon>Chordata</taxon>
        <taxon>Craniata</taxon>
        <taxon>Vertebrata</taxon>
        <taxon>Euteleostomi</taxon>
        <taxon>Mammalia</taxon>
        <taxon>Eutheria</taxon>
        <taxon>Euarchontoglires</taxon>
        <taxon>Glires</taxon>
        <taxon>Rodentia</taxon>
        <taxon>Myomorpha</taxon>
        <taxon>Muroidea</taxon>
        <taxon>Muridae</taxon>
        <taxon>Murinae</taxon>
        <taxon>Mus</taxon>
        <taxon>Mus</taxon>
    </lineage>
</organism>
<keyword id="KW-0221">Differentiation</keyword>
<keyword id="KW-0472">Membrane</keyword>
<keyword id="KW-0539">Nucleus</keyword>
<keyword id="KW-1185">Reference proteome</keyword>
<keyword id="KW-0744">Spermatogenesis</keyword>
<protein>
    <recommendedName>
        <fullName evidence="3">Spermatogenesis-associated protein 46</fullName>
    </recommendedName>
</protein>
<reference key="1">
    <citation type="journal article" date="2004" name="Genome Res.">
        <title>The status, quality, and expansion of the NIH full-length cDNA project: the Mammalian Gene Collection (MGC).</title>
        <authorList>
            <consortium name="The MGC Project Team"/>
        </authorList>
    </citation>
    <scope>NUCLEOTIDE SEQUENCE [LARGE SCALE MRNA]</scope>
    <source>
        <tissue>Testis</tissue>
    </source>
</reference>
<reference key="2">
    <citation type="journal article" date="2016" name="Biol. Reprod.">
        <title>Deficiency of SPATA46, a novel nuclear membrane protein, causes subfertility in male mice.</title>
        <authorList>
            <person name="Chen J."/>
            <person name="Gu Y."/>
            <person name="Zhang Z."/>
            <person name="Zheng W."/>
            <person name="Yang L."/>
            <person name="Huang W."/>
            <person name="Lin S."/>
            <person name="Li Y."/>
            <person name="Guo H."/>
            <person name="Luo M."/>
            <person name="Ma Q."/>
            <person name="Jiang Z."/>
            <person name="Tang A."/>
            <person name="Gui Y."/>
        </authorList>
    </citation>
    <scope>TISSUE SPECIFICITY</scope>
    <scope>DEVELOPMENTAL STAGE</scope>
    <scope>DISRUPTION PHENOTYPE</scope>
    <scope>FUNCTION</scope>
</reference>
<name>SPT46_MOUSE</name>
<evidence type="ECO:0000256" key="1">
    <source>
        <dbReference type="SAM" id="MobiDB-lite"/>
    </source>
</evidence>
<evidence type="ECO:0000269" key="2">
    <source>
    </source>
</evidence>
<evidence type="ECO:0000303" key="3">
    <source>
    </source>
</evidence>
<dbReference type="EMBL" id="BC099563">
    <property type="protein sequence ID" value="AAH99563.1"/>
    <property type="molecule type" value="mRNA"/>
</dbReference>
<dbReference type="EMBL" id="BC132313">
    <property type="protein sequence ID" value="AAI32314.1"/>
    <property type="molecule type" value="mRNA"/>
</dbReference>
<dbReference type="EMBL" id="BC132315">
    <property type="protein sequence ID" value="AAI32316.1"/>
    <property type="molecule type" value="mRNA"/>
</dbReference>
<dbReference type="CCDS" id="CCDS15471.1"/>
<dbReference type="RefSeq" id="NP_001034682.1">
    <property type="nucleotide sequence ID" value="NM_001039593.2"/>
</dbReference>
<dbReference type="FunCoup" id="Q4FZF2">
    <property type="interactions" value="44"/>
</dbReference>
<dbReference type="STRING" id="10090.ENSMUSP00000062245"/>
<dbReference type="iPTMnet" id="Q4FZF2"/>
<dbReference type="PhosphoSitePlus" id="Q4FZF2"/>
<dbReference type="PaxDb" id="10090-ENSMUSP00000062245"/>
<dbReference type="ProteomicsDB" id="257391"/>
<dbReference type="Antibodypedia" id="34319">
    <property type="antibodies" value="166 antibodies from 16 providers"/>
</dbReference>
<dbReference type="Ensembl" id="ENSMUST00000056991.6">
    <property type="protein sequence ID" value="ENSMUSP00000062245.6"/>
    <property type="gene ID" value="ENSMUSG00000042800.6"/>
</dbReference>
<dbReference type="GeneID" id="76925"/>
<dbReference type="KEGG" id="mmu:76925"/>
<dbReference type="UCSC" id="uc007dmd.1">
    <property type="organism name" value="mouse"/>
</dbReference>
<dbReference type="AGR" id="MGI:1924175"/>
<dbReference type="CTD" id="284680"/>
<dbReference type="MGI" id="MGI:1924175">
    <property type="gene designation" value="Spata46"/>
</dbReference>
<dbReference type="VEuPathDB" id="HostDB:ENSMUSG00000042800"/>
<dbReference type="eggNOG" id="ENOG502S3KA">
    <property type="taxonomic scope" value="Eukaryota"/>
</dbReference>
<dbReference type="GeneTree" id="ENSGT00390000007598"/>
<dbReference type="HOGENOM" id="CLU_073753_0_0_1"/>
<dbReference type="InParanoid" id="Q4FZF2"/>
<dbReference type="OMA" id="QYQSITV"/>
<dbReference type="OrthoDB" id="8898641at2759"/>
<dbReference type="PhylomeDB" id="Q4FZF2"/>
<dbReference type="TreeFam" id="TF337124"/>
<dbReference type="BioGRID-ORCS" id="76925">
    <property type="hits" value="2 hits in 77 CRISPR screens"/>
</dbReference>
<dbReference type="PRO" id="PR:Q4FZF2"/>
<dbReference type="Proteomes" id="UP000000589">
    <property type="component" value="Chromosome 1"/>
</dbReference>
<dbReference type="RNAct" id="Q4FZF2">
    <property type="molecule type" value="protein"/>
</dbReference>
<dbReference type="Bgee" id="ENSMUSG00000042800">
    <property type="expression patterns" value="Expressed in seminiferous tubule of testis and 39 other cell types or tissues"/>
</dbReference>
<dbReference type="GO" id="GO:0031965">
    <property type="term" value="C:nuclear membrane"/>
    <property type="evidence" value="ECO:0000315"/>
    <property type="project" value="UniProtKB"/>
</dbReference>
<dbReference type="GO" id="GO:0030154">
    <property type="term" value="P:cell differentiation"/>
    <property type="evidence" value="ECO:0007669"/>
    <property type="project" value="UniProtKB-KW"/>
</dbReference>
<dbReference type="GO" id="GO:0007342">
    <property type="term" value="P:fusion of sperm to egg plasma membrane involved in single fertilization"/>
    <property type="evidence" value="ECO:0000315"/>
    <property type="project" value="UniProtKB"/>
</dbReference>
<dbReference type="GO" id="GO:0007283">
    <property type="term" value="P:spermatogenesis"/>
    <property type="evidence" value="ECO:0000315"/>
    <property type="project" value="UniProtKB"/>
</dbReference>
<dbReference type="InterPro" id="IPR040879">
    <property type="entry name" value="Spt46-like"/>
</dbReference>
<dbReference type="PANTHER" id="PTHR33517">
    <property type="entry name" value="PROTEIN FAM170B-RELATED"/>
    <property type="match status" value="1"/>
</dbReference>
<dbReference type="PANTHER" id="PTHR33517:SF4">
    <property type="entry name" value="SPERMATOGENESIS-ASSOCIATED PROTEIN 46"/>
    <property type="match status" value="1"/>
</dbReference>
<dbReference type="Pfam" id="PF17734">
    <property type="entry name" value="Spt46"/>
    <property type="match status" value="2"/>
</dbReference>
<comment type="function">
    <text evidence="2">Plays a role in spermiogenesis and fertilization.</text>
</comment>
<comment type="subcellular location">
    <subcellularLocation>
        <location evidence="2">Nucleus membrane</location>
    </subcellularLocation>
    <text evidence="2">Located throughout the subacrosomal area (PubMed:27488028).</text>
</comment>
<comment type="tissue specificity">
    <text evidence="2">Testis-specific (PubMed:27488028).</text>
</comment>
<comment type="developmental stage">
    <text evidence="2">Increases in the third week postnatal and gradually increased until the adult stage (PubMed:27488028).</text>
</comment>
<comment type="disruption phenotype">
    <text evidence="2">Deficient mice develop and grow normally. Knockout males, but not females, exhibit subfertile capacity. Deficient mice are characterized by abnormal sperm head shape and a failure of sperm-egg fusion (PubMed:27488028).</text>
</comment>
<sequence>MDNYSLLSTPRPRISSSALSAFPDIMSSLATSLPDLGDTQNGEQLRRNCTIYRPWFSPYSYFVCTDKESHLEAYGFPEVDREEGRGDNCLLEDVAESVCSSSSSQENTYPREANRKSKHGLDSITSQDILMASKWHPAQQNGYKCASCCRMYPTLHSLKSHIKGGFKEGFSCKVYYRKLKTLWGKEQKARTGDRISLGSCQAFK</sequence>